<feature type="chain" id="PRO_0000371860" description="NADH-quinone oxidoreductase subunit D">
    <location>
        <begin position="1"/>
        <end position="367"/>
    </location>
</feature>
<comment type="function">
    <text evidence="1">NDH-1 shuttles electrons from NADH, via FMN and iron-sulfur (Fe-S) centers, to quinones in the respiratory chain. The immediate electron acceptor for the enzyme in this species is believed to be ubiquinone. Couples the redox reaction to proton translocation (for every two electrons transferred, four hydrogen ions are translocated across the cytoplasmic membrane), and thus conserves the redox energy in a proton gradient.</text>
</comment>
<comment type="catalytic activity">
    <reaction evidence="1">
        <text>a quinone + NADH + 5 H(+)(in) = a quinol + NAD(+) + 4 H(+)(out)</text>
        <dbReference type="Rhea" id="RHEA:57888"/>
        <dbReference type="ChEBI" id="CHEBI:15378"/>
        <dbReference type="ChEBI" id="CHEBI:24646"/>
        <dbReference type="ChEBI" id="CHEBI:57540"/>
        <dbReference type="ChEBI" id="CHEBI:57945"/>
        <dbReference type="ChEBI" id="CHEBI:132124"/>
    </reaction>
</comment>
<comment type="subunit">
    <text evidence="1">NDH-1 is composed of 14 different subunits. Subunits NuoB, C, D, E, F, and G constitute the peripheral sector of the complex.</text>
</comment>
<comment type="subcellular location">
    <subcellularLocation>
        <location evidence="1">Cell membrane</location>
        <topology evidence="1">Peripheral membrane protein</topology>
        <orientation evidence="1">Cytoplasmic side</orientation>
    </subcellularLocation>
</comment>
<comment type="similarity">
    <text evidence="1">Belongs to the complex I 49 kDa subunit family.</text>
</comment>
<accession>Q3Z7Z8</accession>
<organism>
    <name type="scientific">Dehalococcoides mccartyi (strain ATCC BAA-2266 / KCTC 15142 / 195)</name>
    <name type="common">Dehalococcoides ethenogenes (strain 195)</name>
    <dbReference type="NCBI Taxonomy" id="243164"/>
    <lineage>
        <taxon>Bacteria</taxon>
        <taxon>Bacillati</taxon>
        <taxon>Chloroflexota</taxon>
        <taxon>Dehalococcoidia</taxon>
        <taxon>Dehalococcoidales</taxon>
        <taxon>Dehalococcoidaceae</taxon>
        <taxon>Dehalococcoides</taxon>
    </lineage>
</organism>
<reference key="1">
    <citation type="journal article" date="2005" name="Science">
        <title>Genome sequence of the PCE-dechlorinating bacterium Dehalococcoides ethenogenes.</title>
        <authorList>
            <person name="Seshadri R."/>
            <person name="Adrian L."/>
            <person name="Fouts D.E."/>
            <person name="Eisen J.A."/>
            <person name="Phillippy A.M."/>
            <person name="Methe B.A."/>
            <person name="Ward N.L."/>
            <person name="Nelson W.C."/>
            <person name="DeBoy R.T."/>
            <person name="Khouri H.M."/>
            <person name="Kolonay J.F."/>
            <person name="Dodson R.J."/>
            <person name="Daugherty S.C."/>
            <person name="Brinkac L.M."/>
            <person name="Sullivan S.A."/>
            <person name="Madupu R."/>
            <person name="Nelson K.E."/>
            <person name="Kang K.H."/>
            <person name="Impraim M."/>
            <person name="Tran K."/>
            <person name="Robinson J.M."/>
            <person name="Forberger H.A."/>
            <person name="Fraser C.M."/>
            <person name="Zinder S.H."/>
            <person name="Heidelberg J.F."/>
        </authorList>
    </citation>
    <scope>NUCLEOTIDE SEQUENCE [LARGE SCALE GENOMIC DNA]</scope>
    <source>
        <strain>ATCC BAA-2266 / KCTC 15142 / 195</strain>
    </source>
</reference>
<proteinExistence type="inferred from homology"/>
<protein>
    <recommendedName>
        <fullName evidence="1">NADH-quinone oxidoreductase subunit D</fullName>
        <ecNumber evidence="1">7.1.1.-</ecNumber>
    </recommendedName>
    <alternativeName>
        <fullName evidence="1">NADH dehydrogenase I subunit D</fullName>
    </alternativeName>
    <alternativeName>
        <fullName evidence="1">NDH-1 subunit D</fullName>
    </alternativeName>
</protein>
<sequence>MAIKTESFILNIGPQHPSTHGVFRLRLILDGEVITDLEPVFGYLHRGIEKLAEGRTYLQDIPFTDRLDYLGSMTNNHAYVMAVEKLAGITVPERAEYIRVILDELQRIASHLAGLGFFLNDLGALQTPLLYMFREREKIVELFDMCSGQRLNYNYYRFGGFVQDLPEEFLPALKKLLDTLPGFIDEYEQLISTNEIVLIRTKGVGVLKRELAINSSAAGPVLRASGVNWDIRRNDPYSIYDRFEFDIPTAQNGDTYDRYMVRIREMRQSVRILRQAVKDLPEGEIMGKAPKLLKPPAGEVYSRIEGPKGELGFYLVSDGTDKPYRWRVRPPCLLNLSALKDMVVGWKVADLMAIFGSIDIVMGEVDR</sequence>
<name>NUOD_DEHM1</name>
<gene>
    <name evidence="1" type="primary">nuoD</name>
    <name type="ordered locus">DET0926</name>
</gene>
<dbReference type="EC" id="7.1.1.-" evidence="1"/>
<dbReference type="EMBL" id="CP000027">
    <property type="protein sequence ID" value="AAW39809.1"/>
    <property type="molecule type" value="Genomic_DNA"/>
</dbReference>
<dbReference type="RefSeq" id="WP_010936630.1">
    <property type="nucleotide sequence ID" value="NC_002936.3"/>
</dbReference>
<dbReference type="SMR" id="Q3Z7Z8"/>
<dbReference type="STRING" id="243164.DET0926"/>
<dbReference type="GeneID" id="3229771"/>
<dbReference type="KEGG" id="det:DET0926"/>
<dbReference type="PATRIC" id="fig|243164.10.peg.876"/>
<dbReference type="eggNOG" id="COG0649">
    <property type="taxonomic scope" value="Bacteria"/>
</dbReference>
<dbReference type="HOGENOM" id="CLU_015134_1_2_0"/>
<dbReference type="InParanoid" id="Q3Z7Z8"/>
<dbReference type="Proteomes" id="UP000008289">
    <property type="component" value="Chromosome"/>
</dbReference>
<dbReference type="GO" id="GO:0005886">
    <property type="term" value="C:plasma membrane"/>
    <property type="evidence" value="ECO:0007669"/>
    <property type="project" value="UniProtKB-SubCell"/>
</dbReference>
<dbReference type="GO" id="GO:0051287">
    <property type="term" value="F:NAD binding"/>
    <property type="evidence" value="ECO:0007669"/>
    <property type="project" value="InterPro"/>
</dbReference>
<dbReference type="GO" id="GO:0050136">
    <property type="term" value="F:NADH:ubiquinone reductase (non-electrogenic) activity"/>
    <property type="evidence" value="ECO:0007669"/>
    <property type="project" value="UniProtKB-UniRule"/>
</dbReference>
<dbReference type="GO" id="GO:0048038">
    <property type="term" value="F:quinone binding"/>
    <property type="evidence" value="ECO:0007669"/>
    <property type="project" value="UniProtKB-KW"/>
</dbReference>
<dbReference type="Gene3D" id="1.10.645.10">
    <property type="entry name" value="Cytochrome-c3 Hydrogenase, chain B"/>
    <property type="match status" value="1"/>
</dbReference>
<dbReference type="HAMAP" id="MF_01358">
    <property type="entry name" value="NDH1_NuoD"/>
    <property type="match status" value="1"/>
</dbReference>
<dbReference type="InterPro" id="IPR001135">
    <property type="entry name" value="NADH_Q_OxRdtase_suD"/>
</dbReference>
<dbReference type="InterPro" id="IPR014029">
    <property type="entry name" value="NADH_UbQ_OxRdtase_49kDa_CS"/>
</dbReference>
<dbReference type="InterPro" id="IPR022885">
    <property type="entry name" value="NDH1_su_D/H"/>
</dbReference>
<dbReference type="InterPro" id="IPR029014">
    <property type="entry name" value="NiFe-Hase_large"/>
</dbReference>
<dbReference type="NCBIfam" id="NF004739">
    <property type="entry name" value="PRK06075.1"/>
    <property type="match status" value="1"/>
</dbReference>
<dbReference type="NCBIfam" id="NF008974">
    <property type="entry name" value="PRK12322.1"/>
    <property type="match status" value="1"/>
</dbReference>
<dbReference type="PANTHER" id="PTHR11993:SF10">
    <property type="entry name" value="NADH DEHYDROGENASE [UBIQUINONE] IRON-SULFUR PROTEIN 2, MITOCHONDRIAL"/>
    <property type="match status" value="1"/>
</dbReference>
<dbReference type="PANTHER" id="PTHR11993">
    <property type="entry name" value="NADH-UBIQUINONE OXIDOREDUCTASE 49 KDA SUBUNIT"/>
    <property type="match status" value="1"/>
</dbReference>
<dbReference type="Pfam" id="PF00346">
    <property type="entry name" value="Complex1_49kDa"/>
    <property type="match status" value="1"/>
</dbReference>
<dbReference type="SUPFAM" id="SSF56762">
    <property type="entry name" value="HydB/Nqo4-like"/>
    <property type="match status" value="1"/>
</dbReference>
<dbReference type="PROSITE" id="PS00535">
    <property type="entry name" value="COMPLEX1_49K"/>
    <property type="match status" value="1"/>
</dbReference>
<evidence type="ECO:0000255" key="1">
    <source>
        <dbReference type="HAMAP-Rule" id="MF_01358"/>
    </source>
</evidence>
<keyword id="KW-1003">Cell membrane</keyword>
<keyword id="KW-0472">Membrane</keyword>
<keyword id="KW-0520">NAD</keyword>
<keyword id="KW-0874">Quinone</keyword>
<keyword id="KW-1278">Translocase</keyword>
<keyword id="KW-0813">Transport</keyword>
<keyword id="KW-0830">Ubiquinone</keyword>